<name>MOBA_PSEPF</name>
<proteinExistence type="inferred from homology"/>
<dbReference type="EC" id="2.7.7.77" evidence="1"/>
<dbReference type="EMBL" id="CP000094">
    <property type="protein sequence ID" value="ABA75699.1"/>
    <property type="molecule type" value="Genomic_DNA"/>
</dbReference>
<dbReference type="RefSeq" id="WP_011335274.1">
    <property type="nucleotide sequence ID" value="NC_007492.2"/>
</dbReference>
<dbReference type="SMR" id="Q3K955"/>
<dbReference type="KEGG" id="pfo:Pfl01_3962"/>
<dbReference type="eggNOG" id="COG0746">
    <property type="taxonomic scope" value="Bacteria"/>
</dbReference>
<dbReference type="HOGENOM" id="CLU_055597_5_1_6"/>
<dbReference type="Proteomes" id="UP000002704">
    <property type="component" value="Chromosome"/>
</dbReference>
<dbReference type="GO" id="GO:0005737">
    <property type="term" value="C:cytoplasm"/>
    <property type="evidence" value="ECO:0007669"/>
    <property type="project" value="UniProtKB-SubCell"/>
</dbReference>
<dbReference type="GO" id="GO:0005525">
    <property type="term" value="F:GTP binding"/>
    <property type="evidence" value="ECO:0007669"/>
    <property type="project" value="UniProtKB-UniRule"/>
</dbReference>
<dbReference type="GO" id="GO:0046872">
    <property type="term" value="F:metal ion binding"/>
    <property type="evidence" value="ECO:0007669"/>
    <property type="project" value="UniProtKB-KW"/>
</dbReference>
<dbReference type="GO" id="GO:0061603">
    <property type="term" value="F:molybdenum cofactor guanylyltransferase activity"/>
    <property type="evidence" value="ECO:0007669"/>
    <property type="project" value="UniProtKB-EC"/>
</dbReference>
<dbReference type="GO" id="GO:1902758">
    <property type="term" value="P:bis(molybdopterin guanine dinucleotide)molybdenum biosynthetic process"/>
    <property type="evidence" value="ECO:0007669"/>
    <property type="project" value="TreeGrafter"/>
</dbReference>
<dbReference type="CDD" id="cd02503">
    <property type="entry name" value="MobA"/>
    <property type="match status" value="1"/>
</dbReference>
<dbReference type="Gene3D" id="3.90.550.10">
    <property type="entry name" value="Spore Coat Polysaccharide Biosynthesis Protein SpsA, Chain A"/>
    <property type="match status" value="1"/>
</dbReference>
<dbReference type="HAMAP" id="MF_00316">
    <property type="entry name" value="MobA"/>
    <property type="match status" value="1"/>
</dbReference>
<dbReference type="InterPro" id="IPR025877">
    <property type="entry name" value="MobA-like_NTP_Trfase"/>
</dbReference>
<dbReference type="InterPro" id="IPR013482">
    <property type="entry name" value="Molybde_CF_guanTrfase"/>
</dbReference>
<dbReference type="InterPro" id="IPR029044">
    <property type="entry name" value="Nucleotide-diphossugar_trans"/>
</dbReference>
<dbReference type="NCBIfam" id="TIGR02665">
    <property type="entry name" value="molyb_mobA"/>
    <property type="match status" value="1"/>
</dbReference>
<dbReference type="PANTHER" id="PTHR19136">
    <property type="entry name" value="MOLYBDENUM COFACTOR GUANYLYLTRANSFERASE"/>
    <property type="match status" value="1"/>
</dbReference>
<dbReference type="PANTHER" id="PTHR19136:SF81">
    <property type="entry name" value="MOLYBDENUM COFACTOR GUANYLYLTRANSFERASE"/>
    <property type="match status" value="1"/>
</dbReference>
<dbReference type="Pfam" id="PF12804">
    <property type="entry name" value="NTP_transf_3"/>
    <property type="match status" value="1"/>
</dbReference>
<dbReference type="SUPFAM" id="SSF53448">
    <property type="entry name" value="Nucleotide-diphospho-sugar transferases"/>
    <property type="match status" value="1"/>
</dbReference>
<protein>
    <recommendedName>
        <fullName evidence="1">Molybdenum cofactor guanylyltransferase</fullName>
        <shortName evidence="1">MoCo guanylyltransferase</shortName>
        <ecNumber evidence="1">2.7.7.77</ecNumber>
    </recommendedName>
    <alternativeName>
        <fullName evidence="1">GTP:molybdopterin guanylyltransferase</fullName>
    </alternativeName>
    <alternativeName>
        <fullName evidence="1">Mo-MPT guanylyltransferase</fullName>
    </alternativeName>
    <alternativeName>
        <fullName evidence="1">Molybdopterin guanylyltransferase</fullName>
    </alternativeName>
    <alternativeName>
        <fullName evidence="1">Molybdopterin-guanine dinucleotide synthase</fullName>
        <shortName evidence="1">MGD synthase</shortName>
    </alternativeName>
</protein>
<organism>
    <name type="scientific">Pseudomonas fluorescens (strain Pf0-1)</name>
    <dbReference type="NCBI Taxonomy" id="205922"/>
    <lineage>
        <taxon>Bacteria</taxon>
        <taxon>Pseudomonadati</taxon>
        <taxon>Pseudomonadota</taxon>
        <taxon>Gammaproteobacteria</taxon>
        <taxon>Pseudomonadales</taxon>
        <taxon>Pseudomonadaceae</taxon>
        <taxon>Pseudomonas</taxon>
    </lineage>
</organism>
<accession>Q3K955</accession>
<feature type="chain" id="PRO_1000019135" description="Molybdenum cofactor guanylyltransferase">
    <location>
        <begin position="1"/>
        <end position="200"/>
    </location>
</feature>
<feature type="binding site" evidence="1">
    <location>
        <begin position="15"/>
        <end position="17"/>
    </location>
    <ligand>
        <name>GTP</name>
        <dbReference type="ChEBI" id="CHEBI:37565"/>
    </ligand>
</feature>
<feature type="binding site" evidence="1">
    <location>
        <position position="28"/>
    </location>
    <ligand>
        <name>GTP</name>
        <dbReference type="ChEBI" id="CHEBI:37565"/>
    </ligand>
</feature>
<feature type="binding site" evidence="1">
    <location>
        <position position="74"/>
    </location>
    <ligand>
        <name>GTP</name>
        <dbReference type="ChEBI" id="CHEBI:37565"/>
    </ligand>
</feature>
<feature type="binding site" evidence="1">
    <location>
        <position position="104"/>
    </location>
    <ligand>
        <name>GTP</name>
        <dbReference type="ChEBI" id="CHEBI:37565"/>
    </ligand>
</feature>
<feature type="binding site" evidence="1">
    <location>
        <position position="104"/>
    </location>
    <ligand>
        <name>Mg(2+)</name>
        <dbReference type="ChEBI" id="CHEBI:18420"/>
    </ligand>
</feature>
<reference key="1">
    <citation type="journal article" date="2009" name="Genome Biol.">
        <title>Genomic and genetic analyses of diversity and plant interactions of Pseudomonas fluorescens.</title>
        <authorList>
            <person name="Silby M.W."/>
            <person name="Cerdeno-Tarraga A.M."/>
            <person name="Vernikos G.S."/>
            <person name="Giddens S.R."/>
            <person name="Jackson R.W."/>
            <person name="Preston G.M."/>
            <person name="Zhang X.-X."/>
            <person name="Moon C.D."/>
            <person name="Gehrig S.M."/>
            <person name="Godfrey S.A.C."/>
            <person name="Knight C.G."/>
            <person name="Malone J.G."/>
            <person name="Robinson Z."/>
            <person name="Spiers A.J."/>
            <person name="Harris S."/>
            <person name="Challis G.L."/>
            <person name="Yaxley A.M."/>
            <person name="Harris D."/>
            <person name="Seeger K."/>
            <person name="Murphy L."/>
            <person name="Rutter S."/>
            <person name="Squares R."/>
            <person name="Quail M.A."/>
            <person name="Saunders E."/>
            <person name="Mavromatis K."/>
            <person name="Brettin T.S."/>
            <person name="Bentley S.D."/>
            <person name="Hothersall J."/>
            <person name="Stephens E."/>
            <person name="Thomas C.M."/>
            <person name="Parkhill J."/>
            <person name="Levy S.B."/>
            <person name="Rainey P.B."/>
            <person name="Thomson N.R."/>
        </authorList>
    </citation>
    <scope>NUCLEOTIDE SEQUENCE [LARGE SCALE GENOMIC DNA]</scope>
    <source>
        <strain>Pf0-1</strain>
    </source>
</reference>
<comment type="function">
    <text evidence="1">Transfers a GMP moiety from GTP to Mo-molybdopterin (Mo-MPT) cofactor (Moco or molybdenum cofactor) to form Mo-molybdopterin guanine dinucleotide (Mo-MGD) cofactor.</text>
</comment>
<comment type="catalytic activity">
    <reaction evidence="1">
        <text>Mo-molybdopterin + GTP + H(+) = Mo-molybdopterin guanine dinucleotide + diphosphate</text>
        <dbReference type="Rhea" id="RHEA:34243"/>
        <dbReference type="ChEBI" id="CHEBI:15378"/>
        <dbReference type="ChEBI" id="CHEBI:33019"/>
        <dbReference type="ChEBI" id="CHEBI:37565"/>
        <dbReference type="ChEBI" id="CHEBI:71302"/>
        <dbReference type="ChEBI" id="CHEBI:71310"/>
        <dbReference type="EC" id="2.7.7.77"/>
    </reaction>
</comment>
<comment type="cofactor">
    <cofactor evidence="1">
        <name>Mg(2+)</name>
        <dbReference type="ChEBI" id="CHEBI:18420"/>
    </cofactor>
</comment>
<comment type="subunit">
    <text evidence="1">Monomer.</text>
</comment>
<comment type="subcellular location">
    <subcellularLocation>
        <location evidence="1">Cytoplasm</location>
    </subcellularLocation>
</comment>
<comment type="domain">
    <text evidence="1">The N-terminal domain determines nucleotide recognition and specific binding, while the C-terminal domain determines the specific binding to the target protein.</text>
</comment>
<comment type="similarity">
    <text evidence="1">Belongs to the MobA family.</text>
</comment>
<keyword id="KW-0963">Cytoplasm</keyword>
<keyword id="KW-0342">GTP-binding</keyword>
<keyword id="KW-0460">Magnesium</keyword>
<keyword id="KW-0479">Metal-binding</keyword>
<keyword id="KW-0501">Molybdenum cofactor biosynthesis</keyword>
<keyword id="KW-0547">Nucleotide-binding</keyword>
<keyword id="KW-0808">Transferase</keyword>
<gene>
    <name evidence="1" type="primary">mobA</name>
    <name type="ordered locus">Pfl01_3962</name>
</gene>
<evidence type="ECO:0000255" key="1">
    <source>
        <dbReference type="HAMAP-Rule" id="MF_00316"/>
    </source>
</evidence>
<sequence>MTSNTPLPPCSILLLAGGRGQRMGGQDKGLVEWHGEPLIVHLHRKVRPLTDDLIISCNRNRERYAPFADRLVSDDEEDFPGPLAGIRAGLKAARHTHLLVLPCDVPRIDLALLHNMREAAGLNSEKPLMLRHDDHWEPLLCVIPVALLPAFENAWNAGERSPGRVMRNLDAQALVCPDNDPRLANLNTPELLSSHNTVSD</sequence>